<keyword id="KW-0225">Disease variant</keyword>
<keyword id="KW-0472">Membrane</keyword>
<keyword id="KW-0496">Mitochondrion</keyword>
<keyword id="KW-0999">Mitochondrion inner membrane</keyword>
<keyword id="KW-1267">Proteomics identification</keyword>
<keyword id="KW-1185">Reference proteome</keyword>
<keyword id="KW-0677">Repeat</keyword>
<keyword id="KW-0812">Transmembrane</keyword>
<keyword id="KW-1133">Transmembrane helix</keyword>
<keyword id="KW-0813">Transport</keyword>
<dbReference type="EMBL" id="AK000558">
    <property type="protein sequence ID" value="BAA91253.1"/>
    <property type="molecule type" value="mRNA"/>
</dbReference>
<dbReference type="EMBL" id="CR457242">
    <property type="protein sequence ID" value="CAG33523.1"/>
    <property type="molecule type" value="mRNA"/>
</dbReference>
<dbReference type="EMBL" id="BC013194">
    <property type="protein sequence ID" value="AAH13194.1"/>
    <property type="molecule type" value="mRNA"/>
</dbReference>
<dbReference type="EMBL" id="AC099332">
    <property type="status" value="NOT_ANNOTATED_CDS"/>
    <property type="molecule type" value="Genomic_DNA"/>
</dbReference>
<dbReference type="EMBL" id="AC104850">
    <property type="status" value="NOT_ANNOTATED_CDS"/>
    <property type="molecule type" value="Genomic_DNA"/>
</dbReference>
<dbReference type="EMBL" id="CH471055">
    <property type="protein sequence ID" value="EAW64580.1"/>
    <property type="molecule type" value="Genomic_DNA"/>
</dbReference>
<dbReference type="EMBL" id="CH471055">
    <property type="protein sequence ID" value="EAW64581.1"/>
    <property type="molecule type" value="Genomic_DNA"/>
</dbReference>
<dbReference type="CCDS" id="CCDS2685.1"/>
<dbReference type="RefSeq" id="NP_060345.2">
    <property type="nucleotide sequence ID" value="NM_017875.4"/>
</dbReference>
<dbReference type="SMR" id="Q96DW6"/>
<dbReference type="BioGRID" id="120313">
    <property type="interactions" value="5"/>
</dbReference>
<dbReference type="FunCoup" id="Q96DW6">
    <property type="interactions" value="973"/>
</dbReference>
<dbReference type="IntAct" id="Q96DW6">
    <property type="interactions" value="4"/>
</dbReference>
<dbReference type="STRING" id="9606.ENSP00000497532"/>
<dbReference type="TCDB" id="2.A.29.5.6">
    <property type="family name" value="the mitochondrial carrier (mc) family"/>
</dbReference>
<dbReference type="iPTMnet" id="Q96DW6"/>
<dbReference type="PhosphoSitePlus" id="Q96DW6"/>
<dbReference type="BioMuta" id="SLC25A38"/>
<dbReference type="DMDM" id="74751821"/>
<dbReference type="jPOST" id="Q96DW6"/>
<dbReference type="MassIVE" id="Q96DW6"/>
<dbReference type="PaxDb" id="9606-ENSP00000273158"/>
<dbReference type="PeptideAtlas" id="Q96DW6"/>
<dbReference type="ProteomicsDB" id="76331"/>
<dbReference type="Pumba" id="Q96DW6"/>
<dbReference type="Antibodypedia" id="12178">
    <property type="antibodies" value="117 antibodies from 26 providers"/>
</dbReference>
<dbReference type="DNASU" id="54977"/>
<dbReference type="Ensembl" id="ENST00000650617.1">
    <property type="protein sequence ID" value="ENSP00000497532.1"/>
    <property type="gene ID" value="ENSG00000144659.13"/>
</dbReference>
<dbReference type="GeneID" id="54977"/>
<dbReference type="KEGG" id="hsa:54977"/>
<dbReference type="MANE-Select" id="ENST00000650617.1">
    <property type="protein sequence ID" value="ENSP00000497532.1"/>
    <property type="RefSeq nucleotide sequence ID" value="NM_017875.4"/>
    <property type="RefSeq protein sequence ID" value="NP_060345.2"/>
</dbReference>
<dbReference type="UCSC" id="uc003cjo.3">
    <property type="organism name" value="human"/>
</dbReference>
<dbReference type="AGR" id="HGNC:26054"/>
<dbReference type="CTD" id="54977"/>
<dbReference type="DisGeNET" id="54977"/>
<dbReference type="GeneCards" id="SLC25A38"/>
<dbReference type="HGNC" id="HGNC:26054">
    <property type="gene designation" value="SLC25A38"/>
</dbReference>
<dbReference type="HPA" id="ENSG00000144659">
    <property type="expression patterns" value="Low tissue specificity"/>
</dbReference>
<dbReference type="MalaCards" id="SLC25A38"/>
<dbReference type="MIM" id="205950">
    <property type="type" value="phenotype"/>
</dbReference>
<dbReference type="MIM" id="610819">
    <property type="type" value="gene"/>
</dbReference>
<dbReference type="neXtProt" id="NX_Q96DW6"/>
<dbReference type="OpenTargets" id="ENSG00000144659"/>
<dbReference type="Orphanet" id="260305">
    <property type="disease" value="Autosomal recessive sideroblastic anemia"/>
</dbReference>
<dbReference type="PharmGKB" id="PA162403607"/>
<dbReference type="VEuPathDB" id="HostDB:ENSG00000144659"/>
<dbReference type="eggNOG" id="KOG0766">
    <property type="taxonomic scope" value="Eukaryota"/>
</dbReference>
<dbReference type="GeneTree" id="ENSGT00550000075117"/>
<dbReference type="HOGENOM" id="CLU_015166_0_3_1"/>
<dbReference type="InParanoid" id="Q96DW6"/>
<dbReference type="OMA" id="WGIYEEL"/>
<dbReference type="OrthoDB" id="1924968at2759"/>
<dbReference type="PAN-GO" id="Q96DW6">
    <property type="GO annotations" value="3 GO annotations based on evolutionary models"/>
</dbReference>
<dbReference type="PhylomeDB" id="Q96DW6"/>
<dbReference type="TreeFam" id="TF332793"/>
<dbReference type="PathwayCommons" id="Q96DW6"/>
<dbReference type="SignaLink" id="Q96DW6"/>
<dbReference type="BioGRID-ORCS" id="54977">
    <property type="hits" value="176 hits in 1125 CRISPR screens"/>
</dbReference>
<dbReference type="ChiTaRS" id="SLC25A38">
    <property type="organism name" value="human"/>
</dbReference>
<dbReference type="GenomeRNAi" id="54977"/>
<dbReference type="Pharos" id="Q96DW6">
    <property type="development level" value="Tbio"/>
</dbReference>
<dbReference type="PRO" id="PR:Q96DW6"/>
<dbReference type="Proteomes" id="UP000005640">
    <property type="component" value="Chromosome 3"/>
</dbReference>
<dbReference type="RNAct" id="Q96DW6">
    <property type="molecule type" value="protein"/>
</dbReference>
<dbReference type="Bgee" id="ENSG00000144659">
    <property type="expression patterns" value="Expressed in body of pancreas and 184 other cell types or tissues"/>
</dbReference>
<dbReference type="ExpressionAtlas" id="Q96DW6">
    <property type="expression patterns" value="baseline and differential"/>
</dbReference>
<dbReference type="GO" id="GO:0005743">
    <property type="term" value="C:mitochondrial inner membrane"/>
    <property type="evidence" value="ECO:0000250"/>
    <property type="project" value="UniProtKB"/>
</dbReference>
<dbReference type="GO" id="GO:0005739">
    <property type="term" value="C:mitochondrion"/>
    <property type="evidence" value="ECO:0006056"/>
    <property type="project" value="FlyBase"/>
</dbReference>
<dbReference type="GO" id="GO:0015187">
    <property type="term" value="F:glycine transmembrane transporter activity"/>
    <property type="evidence" value="ECO:0000315"/>
    <property type="project" value="UniProtKB"/>
</dbReference>
<dbReference type="GO" id="GO:0030218">
    <property type="term" value="P:erythrocyte differentiation"/>
    <property type="evidence" value="ECO:0000315"/>
    <property type="project" value="UniProtKB"/>
</dbReference>
<dbReference type="GO" id="GO:1904983">
    <property type="term" value="P:glycine import into mitochondrion"/>
    <property type="evidence" value="ECO:0000315"/>
    <property type="project" value="UniProtKB"/>
</dbReference>
<dbReference type="GO" id="GO:0006783">
    <property type="term" value="P:heme biosynthetic process"/>
    <property type="evidence" value="ECO:0000304"/>
    <property type="project" value="UniProtKB"/>
</dbReference>
<dbReference type="FunFam" id="1.50.40.10:FF:000100">
    <property type="entry name" value="Mitochondrial glycine transporter"/>
    <property type="match status" value="1"/>
</dbReference>
<dbReference type="FunFam" id="1.50.40.10:FF:000118">
    <property type="entry name" value="Mitochondrial glycine transporter"/>
    <property type="match status" value="1"/>
</dbReference>
<dbReference type="Gene3D" id="1.50.40.10">
    <property type="entry name" value="Mitochondrial carrier domain"/>
    <property type="match status" value="2"/>
</dbReference>
<dbReference type="HAMAP" id="MF_03064">
    <property type="entry name" value="SLC25A38"/>
    <property type="match status" value="1"/>
</dbReference>
<dbReference type="InterPro" id="IPR030847">
    <property type="entry name" value="Hem25/SLC25A38"/>
</dbReference>
<dbReference type="InterPro" id="IPR018108">
    <property type="entry name" value="Mitochondrial_sb/sol_carrier"/>
</dbReference>
<dbReference type="InterPro" id="IPR023395">
    <property type="entry name" value="Mt_carrier_dom_sf"/>
</dbReference>
<dbReference type="PANTHER" id="PTHR46181">
    <property type="entry name" value="MITOCHONDRIAL GLYCINE TRANSPORTER"/>
    <property type="match status" value="1"/>
</dbReference>
<dbReference type="PANTHER" id="PTHR46181:SF3">
    <property type="entry name" value="MITOCHONDRIAL GLYCINE TRANSPORTER"/>
    <property type="match status" value="1"/>
</dbReference>
<dbReference type="Pfam" id="PF00153">
    <property type="entry name" value="Mito_carr"/>
    <property type="match status" value="3"/>
</dbReference>
<dbReference type="SUPFAM" id="SSF103506">
    <property type="entry name" value="Mitochondrial carrier"/>
    <property type="match status" value="1"/>
</dbReference>
<dbReference type="PROSITE" id="PS50920">
    <property type="entry name" value="SOLCAR"/>
    <property type="match status" value="3"/>
</dbReference>
<evidence type="ECO:0000250" key="1">
    <source>
        <dbReference type="UniProtKB" id="Q91XD8"/>
    </source>
</evidence>
<evidence type="ECO:0000255" key="2">
    <source>
        <dbReference type="HAMAP-Rule" id="MF_03064"/>
    </source>
</evidence>
<evidence type="ECO:0000269" key="3">
    <source>
    </source>
</evidence>
<evidence type="ECO:0000269" key="4">
    <source>
    </source>
</evidence>
<evidence type="ECO:0000269" key="5">
    <source>
    </source>
</evidence>
<evidence type="ECO:0000303" key="6">
    <source>
    </source>
</evidence>
<evidence type="ECO:0000303" key="7">
    <source>
    </source>
</evidence>
<evidence type="ECO:0000305" key="8"/>
<evidence type="ECO:0000312" key="9">
    <source>
        <dbReference type="HGNC" id="HGNC:26054"/>
    </source>
</evidence>
<feature type="chain" id="PRO_0000291802" description="Mitochondrial glycine transporter">
    <location>
        <begin position="1"/>
        <end position="304"/>
    </location>
</feature>
<feature type="transmembrane region" description="Helical; Name=1" evidence="2">
    <location>
        <begin position="31"/>
        <end position="56"/>
    </location>
</feature>
<feature type="transmembrane region" description="Helical; Name=2" evidence="2">
    <location>
        <begin position="89"/>
        <end position="115"/>
    </location>
</feature>
<feature type="transmembrane region" description="Helical; Name=3" evidence="2">
    <location>
        <begin position="127"/>
        <end position="152"/>
    </location>
</feature>
<feature type="transmembrane region" description="Helical; Name=4" evidence="2">
    <location>
        <begin position="180"/>
        <end position="203"/>
    </location>
</feature>
<feature type="transmembrane region" description="Helical; Name=5" evidence="2">
    <location>
        <begin position="219"/>
        <end position="245"/>
    </location>
</feature>
<feature type="transmembrane region" description="Helical; Name=6" evidence="2">
    <location>
        <begin position="274"/>
        <end position="292"/>
    </location>
</feature>
<feature type="repeat" description="Solcar 1" evidence="2">
    <location>
        <begin position="25"/>
        <end position="114"/>
    </location>
</feature>
<feature type="repeat" description="Solcar 2" evidence="2">
    <location>
        <begin position="121"/>
        <end position="205"/>
    </location>
</feature>
<feature type="repeat" description="Solcar 3" evidence="2">
    <location>
        <begin position="215"/>
        <end position="299"/>
    </location>
</feature>
<feature type="sequence variant" id="VAR_032862" description="In dbSNP:rs34127778.">
    <original>R</original>
    <variation>G</variation>
    <location>
        <position position="66"/>
    </location>
</feature>
<feature type="sequence variant" id="VAR_058093" description="In SIDBA2; dbSNP:rs762562272." evidence="3">
    <original>G</original>
    <variation>E</variation>
    <location>
        <position position="130"/>
    </location>
</feature>
<feature type="sequence variant" id="VAR_058094" description="In SIDBA2; dbSNP:rs2041767822." evidence="3">
    <original>R</original>
    <variation>H</variation>
    <location>
        <position position="134"/>
    </location>
</feature>
<feature type="sequence variant" id="VAR_058095" description="In SIDBA2; dbSNP:rs121918331." evidence="3">
    <original>R</original>
    <variation>P</variation>
    <location>
        <position position="187"/>
    </location>
</feature>
<feature type="sequence variant" id="VAR_058096" description="In SIDBA2; dbSNP:rs146864395." evidence="3">
    <original>D</original>
    <variation>H</variation>
    <location>
        <position position="209"/>
    </location>
</feature>
<feature type="sequence conflict" description="In Ref. 1; BAA91253." evidence="8" ref="1">
    <original>D</original>
    <variation>G</variation>
    <location>
        <position position="239"/>
    </location>
</feature>
<comment type="function">
    <text evidence="2 3 5">Mitochondrial glycine transporter that imports glycine into the mitochondrial matrix. Plays an important role in providing glycine for the first enzymatic step in heme biosynthesis, the condensation of glycine with succinyl-CoA to produce 5-aminolevulinate (ALA) in the mitochondrial matrix. Required during erythropoiesis.</text>
</comment>
<comment type="function">
    <text evidence="1">Plays a role as pro-apoptotic protein that induces caspase-dependent apoptosis.</text>
</comment>
<comment type="catalytic activity">
    <reaction evidence="5">
        <text>glycine(in) = glycine(out)</text>
        <dbReference type="Rhea" id="RHEA:70715"/>
        <dbReference type="ChEBI" id="CHEBI:57305"/>
    </reaction>
</comment>
<comment type="subcellular location">
    <subcellularLocation>
        <location evidence="2">Mitochondrion inner membrane</location>
        <topology evidence="2">Multi-pass membrane protein</topology>
    </subcellularLocation>
</comment>
<comment type="tissue specificity">
    <text evidence="3">Preferentially expressed in erythroid cells.</text>
</comment>
<comment type="induction">
    <text evidence="4">Up-regulated in the brains of patients with Alzheimer's disease.</text>
</comment>
<comment type="disease" evidence="3">
    <disease id="DI-00119">
        <name>Anemia, sideroblastic, 2, pyridoxine-refractory</name>
        <acronym>SIDBA2</acronym>
        <description>A form of sideroblastic anemia not responsive to pyridoxine. Sideroblastic anemia is characterized by anemia of varying severity, hypochromic peripheral erythrocytes, systemic iron overload secondary to chronic ineffective erythropoiesis, and the presence of bone marrow ringed sideroblasts. Sideroblasts are characterized by iron-loaded mitochondria clustered around the nucleus.</description>
        <dbReference type="MIM" id="205950"/>
    </disease>
    <text>The disease is caused by variants affecting the gene represented in this entry.</text>
</comment>
<comment type="similarity">
    <text evidence="2">Belongs to the mitochondrial carrier (TC 2.A.29) family. SLC25A38 subfamily.</text>
</comment>
<accession>Q96DW6</accession>
<accession>A1LP07</accession>
<accession>Q9NWX2</accession>
<protein>
    <recommendedName>
        <fullName evidence="2">Mitochondrial glycine transporter</fullName>
    </recommendedName>
    <alternativeName>
        <fullName evidence="6">Appoptosin</fullName>
    </alternativeName>
    <alternativeName>
        <fullName evidence="7">Mitochondrial glycine transporter GlyC</fullName>
    </alternativeName>
    <alternativeName>
        <fullName evidence="2">Solute carrier family 25 member 38</fullName>
    </alternativeName>
</protein>
<proteinExistence type="evidence at protein level"/>
<organism>
    <name type="scientific">Homo sapiens</name>
    <name type="common">Human</name>
    <dbReference type="NCBI Taxonomy" id="9606"/>
    <lineage>
        <taxon>Eukaryota</taxon>
        <taxon>Metazoa</taxon>
        <taxon>Chordata</taxon>
        <taxon>Craniata</taxon>
        <taxon>Vertebrata</taxon>
        <taxon>Euteleostomi</taxon>
        <taxon>Mammalia</taxon>
        <taxon>Eutheria</taxon>
        <taxon>Euarchontoglires</taxon>
        <taxon>Primates</taxon>
        <taxon>Haplorrhini</taxon>
        <taxon>Catarrhini</taxon>
        <taxon>Hominidae</taxon>
        <taxon>Homo</taxon>
    </lineage>
</organism>
<gene>
    <name evidence="9" type="primary">SLC25A38</name>
</gene>
<reference key="1">
    <citation type="journal article" date="2004" name="Nat. Genet.">
        <title>Complete sequencing and characterization of 21,243 full-length human cDNAs.</title>
        <authorList>
            <person name="Ota T."/>
            <person name="Suzuki Y."/>
            <person name="Nishikawa T."/>
            <person name="Otsuki T."/>
            <person name="Sugiyama T."/>
            <person name="Irie R."/>
            <person name="Wakamatsu A."/>
            <person name="Hayashi K."/>
            <person name="Sato H."/>
            <person name="Nagai K."/>
            <person name="Kimura K."/>
            <person name="Makita H."/>
            <person name="Sekine M."/>
            <person name="Obayashi M."/>
            <person name="Nishi T."/>
            <person name="Shibahara T."/>
            <person name="Tanaka T."/>
            <person name="Ishii S."/>
            <person name="Yamamoto J."/>
            <person name="Saito K."/>
            <person name="Kawai Y."/>
            <person name="Isono Y."/>
            <person name="Nakamura Y."/>
            <person name="Nagahari K."/>
            <person name="Murakami K."/>
            <person name="Yasuda T."/>
            <person name="Iwayanagi T."/>
            <person name="Wagatsuma M."/>
            <person name="Shiratori A."/>
            <person name="Sudo H."/>
            <person name="Hosoiri T."/>
            <person name="Kaku Y."/>
            <person name="Kodaira H."/>
            <person name="Kondo H."/>
            <person name="Sugawara M."/>
            <person name="Takahashi M."/>
            <person name="Kanda K."/>
            <person name="Yokoi T."/>
            <person name="Furuya T."/>
            <person name="Kikkawa E."/>
            <person name="Omura Y."/>
            <person name="Abe K."/>
            <person name="Kamihara K."/>
            <person name="Katsuta N."/>
            <person name="Sato K."/>
            <person name="Tanikawa M."/>
            <person name="Yamazaki M."/>
            <person name="Ninomiya K."/>
            <person name="Ishibashi T."/>
            <person name="Yamashita H."/>
            <person name="Murakawa K."/>
            <person name="Fujimori K."/>
            <person name="Tanai H."/>
            <person name="Kimata M."/>
            <person name="Watanabe M."/>
            <person name="Hiraoka S."/>
            <person name="Chiba Y."/>
            <person name="Ishida S."/>
            <person name="Ono Y."/>
            <person name="Takiguchi S."/>
            <person name="Watanabe S."/>
            <person name="Yosida M."/>
            <person name="Hotuta T."/>
            <person name="Kusano J."/>
            <person name="Kanehori K."/>
            <person name="Takahashi-Fujii A."/>
            <person name="Hara H."/>
            <person name="Tanase T.-O."/>
            <person name="Nomura Y."/>
            <person name="Togiya S."/>
            <person name="Komai F."/>
            <person name="Hara R."/>
            <person name="Takeuchi K."/>
            <person name="Arita M."/>
            <person name="Imose N."/>
            <person name="Musashino K."/>
            <person name="Yuuki H."/>
            <person name="Oshima A."/>
            <person name="Sasaki N."/>
            <person name="Aotsuka S."/>
            <person name="Yoshikawa Y."/>
            <person name="Matsunawa H."/>
            <person name="Ichihara T."/>
            <person name="Shiohata N."/>
            <person name="Sano S."/>
            <person name="Moriya S."/>
            <person name="Momiyama H."/>
            <person name="Satoh N."/>
            <person name="Takami S."/>
            <person name="Terashima Y."/>
            <person name="Suzuki O."/>
            <person name="Nakagawa S."/>
            <person name="Senoh A."/>
            <person name="Mizoguchi H."/>
            <person name="Goto Y."/>
            <person name="Shimizu F."/>
            <person name="Wakebe H."/>
            <person name="Hishigaki H."/>
            <person name="Watanabe T."/>
            <person name="Sugiyama A."/>
            <person name="Takemoto M."/>
            <person name="Kawakami B."/>
            <person name="Yamazaki M."/>
            <person name="Watanabe K."/>
            <person name="Kumagai A."/>
            <person name="Itakura S."/>
            <person name="Fukuzumi Y."/>
            <person name="Fujimori Y."/>
            <person name="Komiyama M."/>
            <person name="Tashiro H."/>
            <person name="Tanigami A."/>
            <person name="Fujiwara T."/>
            <person name="Ono T."/>
            <person name="Yamada K."/>
            <person name="Fujii Y."/>
            <person name="Ozaki K."/>
            <person name="Hirao M."/>
            <person name="Ohmori Y."/>
            <person name="Kawabata A."/>
            <person name="Hikiji T."/>
            <person name="Kobatake N."/>
            <person name="Inagaki H."/>
            <person name="Ikema Y."/>
            <person name="Okamoto S."/>
            <person name="Okitani R."/>
            <person name="Kawakami T."/>
            <person name="Noguchi S."/>
            <person name="Itoh T."/>
            <person name="Shigeta K."/>
            <person name="Senba T."/>
            <person name="Matsumura K."/>
            <person name="Nakajima Y."/>
            <person name="Mizuno T."/>
            <person name="Morinaga M."/>
            <person name="Sasaki M."/>
            <person name="Togashi T."/>
            <person name="Oyama M."/>
            <person name="Hata H."/>
            <person name="Watanabe M."/>
            <person name="Komatsu T."/>
            <person name="Mizushima-Sugano J."/>
            <person name="Satoh T."/>
            <person name="Shirai Y."/>
            <person name="Takahashi Y."/>
            <person name="Nakagawa K."/>
            <person name="Okumura K."/>
            <person name="Nagase T."/>
            <person name="Nomura N."/>
            <person name="Kikuchi H."/>
            <person name="Masuho Y."/>
            <person name="Yamashita R."/>
            <person name="Nakai K."/>
            <person name="Yada T."/>
            <person name="Nakamura Y."/>
            <person name="Ohara O."/>
            <person name="Isogai T."/>
            <person name="Sugano S."/>
        </authorList>
    </citation>
    <scope>NUCLEOTIDE SEQUENCE [LARGE SCALE MRNA]</scope>
    <source>
        <tissue>Carcinoma</tissue>
    </source>
</reference>
<reference key="2">
    <citation type="submission" date="2004-06" db="EMBL/GenBank/DDBJ databases">
        <title>Cloning of human full open reading frames in Gateway(TM) system entry vector (pDONR201).</title>
        <authorList>
            <person name="Ebert L."/>
            <person name="Schick M."/>
            <person name="Neubert P."/>
            <person name="Schatten R."/>
            <person name="Henze S."/>
            <person name="Korn B."/>
        </authorList>
    </citation>
    <scope>NUCLEOTIDE SEQUENCE [LARGE SCALE MRNA]</scope>
</reference>
<reference key="3">
    <citation type="journal article" date="2006" name="Nature">
        <title>The DNA sequence, annotation and analysis of human chromosome 3.</title>
        <authorList>
            <person name="Muzny D.M."/>
            <person name="Scherer S.E."/>
            <person name="Kaul R."/>
            <person name="Wang J."/>
            <person name="Yu J."/>
            <person name="Sudbrak R."/>
            <person name="Buhay C.J."/>
            <person name="Chen R."/>
            <person name="Cree A."/>
            <person name="Ding Y."/>
            <person name="Dugan-Rocha S."/>
            <person name="Gill R."/>
            <person name="Gunaratne P."/>
            <person name="Harris R.A."/>
            <person name="Hawes A.C."/>
            <person name="Hernandez J."/>
            <person name="Hodgson A.V."/>
            <person name="Hume J."/>
            <person name="Jackson A."/>
            <person name="Khan Z.M."/>
            <person name="Kovar-Smith C."/>
            <person name="Lewis L.R."/>
            <person name="Lozado R.J."/>
            <person name="Metzker M.L."/>
            <person name="Milosavljevic A."/>
            <person name="Miner G.R."/>
            <person name="Morgan M.B."/>
            <person name="Nazareth L.V."/>
            <person name="Scott G."/>
            <person name="Sodergren E."/>
            <person name="Song X.-Z."/>
            <person name="Steffen D."/>
            <person name="Wei S."/>
            <person name="Wheeler D.A."/>
            <person name="Wright M.W."/>
            <person name="Worley K.C."/>
            <person name="Yuan Y."/>
            <person name="Zhang Z."/>
            <person name="Adams C.Q."/>
            <person name="Ansari-Lari M.A."/>
            <person name="Ayele M."/>
            <person name="Brown M.J."/>
            <person name="Chen G."/>
            <person name="Chen Z."/>
            <person name="Clendenning J."/>
            <person name="Clerc-Blankenburg K.P."/>
            <person name="Chen R."/>
            <person name="Chen Z."/>
            <person name="Davis C."/>
            <person name="Delgado O."/>
            <person name="Dinh H.H."/>
            <person name="Dong W."/>
            <person name="Draper H."/>
            <person name="Ernst S."/>
            <person name="Fu G."/>
            <person name="Gonzalez-Garay M.L."/>
            <person name="Garcia D.K."/>
            <person name="Gillett W."/>
            <person name="Gu J."/>
            <person name="Hao B."/>
            <person name="Haugen E."/>
            <person name="Havlak P."/>
            <person name="He X."/>
            <person name="Hennig S."/>
            <person name="Hu S."/>
            <person name="Huang W."/>
            <person name="Jackson L.R."/>
            <person name="Jacob L.S."/>
            <person name="Kelly S.H."/>
            <person name="Kube M."/>
            <person name="Levy R."/>
            <person name="Li Z."/>
            <person name="Liu B."/>
            <person name="Liu J."/>
            <person name="Liu W."/>
            <person name="Lu J."/>
            <person name="Maheshwari M."/>
            <person name="Nguyen B.-V."/>
            <person name="Okwuonu G.O."/>
            <person name="Palmeiri A."/>
            <person name="Pasternak S."/>
            <person name="Perez L.M."/>
            <person name="Phelps K.A."/>
            <person name="Plopper F.J."/>
            <person name="Qiang B."/>
            <person name="Raymond C."/>
            <person name="Rodriguez R."/>
            <person name="Saenphimmachak C."/>
            <person name="Santibanez J."/>
            <person name="Shen H."/>
            <person name="Shen Y."/>
            <person name="Subramanian S."/>
            <person name="Tabor P.E."/>
            <person name="Verduzco D."/>
            <person name="Waldron L."/>
            <person name="Wang J."/>
            <person name="Wang J."/>
            <person name="Wang Q."/>
            <person name="Williams G.A."/>
            <person name="Wong G.K.-S."/>
            <person name="Yao Z."/>
            <person name="Zhang J."/>
            <person name="Zhang X."/>
            <person name="Zhao G."/>
            <person name="Zhou J."/>
            <person name="Zhou Y."/>
            <person name="Nelson D."/>
            <person name="Lehrach H."/>
            <person name="Reinhardt R."/>
            <person name="Naylor S.L."/>
            <person name="Yang H."/>
            <person name="Olson M."/>
            <person name="Weinstock G."/>
            <person name="Gibbs R.A."/>
        </authorList>
    </citation>
    <scope>NUCLEOTIDE SEQUENCE [LARGE SCALE GENOMIC DNA]</scope>
</reference>
<reference key="4">
    <citation type="submission" date="2005-07" db="EMBL/GenBank/DDBJ databases">
        <authorList>
            <person name="Mural R.J."/>
            <person name="Istrail S."/>
            <person name="Sutton G.G."/>
            <person name="Florea L."/>
            <person name="Halpern A.L."/>
            <person name="Mobarry C.M."/>
            <person name="Lippert R."/>
            <person name="Walenz B."/>
            <person name="Shatkay H."/>
            <person name="Dew I."/>
            <person name="Miller J.R."/>
            <person name="Flanigan M.J."/>
            <person name="Edwards N.J."/>
            <person name="Bolanos R."/>
            <person name="Fasulo D."/>
            <person name="Halldorsson B.V."/>
            <person name="Hannenhalli S."/>
            <person name="Turner R."/>
            <person name="Yooseph S."/>
            <person name="Lu F."/>
            <person name="Nusskern D.R."/>
            <person name="Shue B.C."/>
            <person name="Zheng X.H."/>
            <person name="Zhong F."/>
            <person name="Delcher A.L."/>
            <person name="Huson D.H."/>
            <person name="Kravitz S.A."/>
            <person name="Mouchard L."/>
            <person name="Reinert K."/>
            <person name="Remington K.A."/>
            <person name="Clark A.G."/>
            <person name="Waterman M.S."/>
            <person name="Eichler E.E."/>
            <person name="Adams M.D."/>
            <person name="Hunkapiller M.W."/>
            <person name="Myers E.W."/>
            <person name="Venter J.C."/>
        </authorList>
    </citation>
    <scope>NUCLEOTIDE SEQUENCE [LARGE SCALE GENOMIC DNA]</scope>
</reference>
<reference key="5">
    <citation type="journal article" date="2004" name="Genome Res.">
        <title>The status, quality, and expansion of the NIH full-length cDNA project: the Mammalian Gene Collection (MGC).</title>
        <authorList>
            <consortium name="The MGC Project Team"/>
        </authorList>
    </citation>
    <scope>NUCLEOTIDE SEQUENCE [LARGE SCALE MRNA]</scope>
    <source>
        <tissue>Skin</tissue>
    </source>
</reference>
<reference key="6">
    <citation type="journal article" date="2006" name="Genomics">
        <title>Fourteen novel human members of mitochondrial solute carrier family 25 (SLC25) widely expressed in the central nervous system.</title>
        <authorList>
            <person name="Haitina T."/>
            <person name="Lindblom J."/>
            <person name="Renstroem T."/>
            <person name="Fredriksson R."/>
        </authorList>
    </citation>
    <scope>IDENTIFICATION</scope>
</reference>
<reference key="7">
    <citation type="journal article" date="2009" name="Nat. Genet.">
        <title>Mutations in mitochondrial carrier family gene SLC25A38 cause nonsyndromic autosomal recessive congenital sideroblastic anemia.</title>
        <authorList>
            <person name="Guernsey D.L."/>
            <person name="Jiang H."/>
            <person name="Campagna D.R."/>
            <person name="Evans S.C."/>
            <person name="Ferguson M."/>
            <person name="Kellogg M.D."/>
            <person name="Lachance M."/>
            <person name="Matsuoka M."/>
            <person name="Nightingale M."/>
            <person name="Rideout A."/>
            <person name="Saint-Amant L."/>
            <person name="Schmidt P.J."/>
            <person name="Orr A."/>
            <person name="Bottomley S.S."/>
            <person name="Fleming M.D."/>
            <person name="Ludman M."/>
            <person name="Dyack S."/>
            <person name="Fernandez C.V."/>
            <person name="Samuels M.E."/>
        </authorList>
    </citation>
    <scope>VARIANTS SIDBA2 GLU-130; HIS-134; PRO-187 AND HIS-209</scope>
    <scope>FUNCTION</scope>
    <scope>TISSUE SPECIFICITY</scope>
</reference>
<reference key="8">
    <citation type="journal article" date="2012" name="J. Neurosci.">
        <title>Appoptosin is a novel pro-apoptotic protein and mediates cell death in neurodegeneration.</title>
        <authorList>
            <person name="Zhang H."/>
            <person name="Zhang Y.W."/>
            <person name="Chen Y."/>
            <person name="Huang X."/>
            <person name="Zhou F."/>
            <person name="Wang W."/>
            <person name="Xian B."/>
            <person name="Zhang X."/>
            <person name="Masliah E."/>
            <person name="Chen Q."/>
            <person name="Han J.D."/>
            <person name="Bu G."/>
            <person name="Reed J.C."/>
            <person name="Liao F.F."/>
            <person name="Chen Y.G."/>
            <person name="Xu H."/>
        </authorList>
    </citation>
    <scope>INDUCTION</scope>
</reference>
<reference key="9">
    <citation type="journal article" date="2016" name="J. Biol. Chem.">
        <title>Characterization of human and yeast mitochondrial glycine carriers with implications for heme biosynthesis and anemia.</title>
        <authorList>
            <person name="Lunetti P."/>
            <person name="Damiano F."/>
            <person name="De Benedetto G."/>
            <person name="Siculella L."/>
            <person name="Pennetta A."/>
            <person name="Muto L."/>
            <person name="Paradies E."/>
            <person name="Marobbio C.M."/>
            <person name="Dolce V."/>
            <person name="Capobianco L."/>
        </authorList>
    </citation>
    <scope>FUNCTION</scope>
    <scope>TRANSPORTER ACTIVITY</scope>
</reference>
<sequence length="304" mass="33566">MIQNSRPSLLQPQDVGDTVETLMLHPVIKAFLCGSISGTCSTLLFQPLDLLKTRLQTLQPSDHGSRRVGMLAVLLKVVRTESLLGLWKGMSPSIVRCVPGVGIYFGTLYSLKQYFLRGHPPTALESVMLGVGSRSVAGVCMSPITVIKTRYESGKYGYESIYAALRSIYHSEGHRGLFSGLTATLLRDAPFSGIYLMFYNQTKNIVPHDQVDATLIPITNFSCGIFAGILASLVTQPADVIKTHMQLYPLKFQWIGQAVTLIFKDYGLRGFFQGGIPRALRRTLMAAMAWTVYEEMMAKMGLKS</sequence>
<name>S2538_HUMAN</name>